<proteinExistence type="evidence at protein level"/>
<sequence>RPRFCELPAETGLCKARIRSFHYNRAAQQCLEFIYGGCGGNANRFKTIDECHRTCVG</sequence>
<organism>
    <name type="scientific">Naja nivea</name>
    <name type="common">Cape cobra</name>
    <name type="synonym">Coluber niveus</name>
    <dbReference type="NCBI Taxonomy" id="8655"/>
    <lineage>
        <taxon>Eukaryota</taxon>
        <taxon>Metazoa</taxon>
        <taxon>Chordata</taxon>
        <taxon>Craniata</taxon>
        <taxon>Vertebrata</taxon>
        <taxon>Euteleostomi</taxon>
        <taxon>Lepidosauria</taxon>
        <taxon>Squamata</taxon>
        <taxon>Bifurcata</taxon>
        <taxon>Unidentata</taxon>
        <taxon>Episquamata</taxon>
        <taxon>Toxicofera</taxon>
        <taxon>Serpentes</taxon>
        <taxon>Colubroidea</taxon>
        <taxon>Elapidae</taxon>
        <taxon>Elapinae</taxon>
        <taxon>Naja</taxon>
    </lineage>
</organism>
<comment type="function">
    <text>Serine protease inhibitor.</text>
</comment>
<comment type="subcellular location">
    <subcellularLocation>
        <location>Secreted</location>
    </subcellularLocation>
</comment>
<comment type="tissue specificity">
    <text>Expressed by the venom gland.</text>
</comment>
<comment type="similarity">
    <text evidence="3">Belongs to the venom Kunitz-type family.</text>
</comment>
<accession>P00986</accession>
<keyword id="KW-0903">Direct protein sequencing</keyword>
<keyword id="KW-1015">Disulfide bond</keyword>
<keyword id="KW-0646">Protease inhibitor</keyword>
<keyword id="KW-0964">Secreted</keyword>
<keyword id="KW-0722">Serine protease inhibitor</keyword>
<dbReference type="PIR" id="A01217">
    <property type="entry name" value="TINJVC"/>
</dbReference>
<dbReference type="SMR" id="P00986"/>
<dbReference type="MEROPS" id="I02.055"/>
<dbReference type="GO" id="GO:0005615">
    <property type="term" value="C:extracellular space"/>
    <property type="evidence" value="ECO:0007669"/>
    <property type="project" value="TreeGrafter"/>
</dbReference>
<dbReference type="GO" id="GO:0004867">
    <property type="term" value="F:serine-type endopeptidase inhibitor activity"/>
    <property type="evidence" value="ECO:0007669"/>
    <property type="project" value="UniProtKB-KW"/>
</dbReference>
<dbReference type="CDD" id="cd22594">
    <property type="entry name" value="Kunitz_textilinin-like"/>
    <property type="match status" value="1"/>
</dbReference>
<dbReference type="FunFam" id="4.10.410.10:FF:000021">
    <property type="entry name" value="Serine protease inhibitor, putative"/>
    <property type="match status" value="1"/>
</dbReference>
<dbReference type="Gene3D" id="4.10.410.10">
    <property type="entry name" value="Pancreatic trypsin inhibitor Kunitz domain"/>
    <property type="match status" value="1"/>
</dbReference>
<dbReference type="InterPro" id="IPR002223">
    <property type="entry name" value="Kunitz_BPTI"/>
</dbReference>
<dbReference type="InterPro" id="IPR036880">
    <property type="entry name" value="Kunitz_BPTI_sf"/>
</dbReference>
<dbReference type="InterPro" id="IPR020901">
    <property type="entry name" value="Prtase_inh_Kunz-CS"/>
</dbReference>
<dbReference type="InterPro" id="IPR050098">
    <property type="entry name" value="TFPI/VKTCI-like"/>
</dbReference>
<dbReference type="PANTHER" id="PTHR10083:SF374">
    <property type="entry name" value="BPTI_KUNITZ INHIBITOR DOMAIN-CONTAINING PROTEIN"/>
    <property type="match status" value="1"/>
</dbReference>
<dbReference type="PANTHER" id="PTHR10083">
    <property type="entry name" value="KUNITZ-TYPE PROTEASE INHIBITOR-RELATED"/>
    <property type="match status" value="1"/>
</dbReference>
<dbReference type="Pfam" id="PF00014">
    <property type="entry name" value="Kunitz_BPTI"/>
    <property type="match status" value="1"/>
</dbReference>
<dbReference type="PRINTS" id="PR00759">
    <property type="entry name" value="BASICPTASE"/>
</dbReference>
<dbReference type="SMART" id="SM00131">
    <property type="entry name" value="KU"/>
    <property type="match status" value="1"/>
</dbReference>
<dbReference type="SUPFAM" id="SSF57362">
    <property type="entry name" value="BPTI-like"/>
    <property type="match status" value="1"/>
</dbReference>
<dbReference type="PROSITE" id="PS00280">
    <property type="entry name" value="BPTI_KUNITZ_1"/>
    <property type="match status" value="1"/>
</dbReference>
<dbReference type="PROSITE" id="PS50279">
    <property type="entry name" value="BPTI_KUNITZ_2"/>
    <property type="match status" value="1"/>
</dbReference>
<name>VKT2_NAJNI</name>
<feature type="chain" id="PRO_0000155441" description="Kunitz-type serine protease inhibitor 2">
    <location>
        <begin position="1"/>
        <end position="57"/>
    </location>
</feature>
<feature type="domain" description="BPTI/Kunitz inhibitor" evidence="2">
    <location>
        <begin position="5"/>
        <end position="55"/>
    </location>
</feature>
<feature type="site" description="Reactive bond for trypsin" evidence="1">
    <location>
        <begin position="15"/>
        <end position="16"/>
    </location>
</feature>
<feature type="disulfide bond" evidence="2">
    <location>
        <begin position="5"/>
        <end position="55"/>
    </location>
</feature>
<feature type="disulfide bond" evidence="2">
    <location>
        <begin position="14"/>
        <end position="38"/>
    </location>
</feature>
<feature type="disulfide bond" evidence="2">
    <location>
        <begin position="30"/>
        <end position="51"/>
    </location>
</feature>
<evidence type="ECO:0000250" key="1"/>
<evidence type="ECO:0000255" key="2">
    <source>
        <dbReference type="PROSITE-ProRule" id="PRU00031"/>
    </source>
</evidence>
<evidence type="ECO:0000305" key="3"/>
<reference key="1">
    <citation type="journal article" date="1976" name="J. Biochem.">
        <title>Snake venom proteinase inhibitors. III. Isolation of five polypeptide inhibitors from the venoms of Hemachatus haemachatus (Ringhal's corbra) and Naja nivea (Cape cobra) and the complete amino acid sequences of two of them.</title>
        <authorList>
            <person name="Hokama Y."/>
            <person name="Iwanaga S."/>
            <person name="Tatsuki T."/>
            <person name="Suzuki T."/>
        </authorList>
    </citation>
    <scope>PROTEIN SEQUENCE</scope>
    <source>
        <tissue>Venom</tissue>
    </source>
</reference>
<protein>
    <recommendedName>
        <fullName>Kunitz-type serine protease inhibitor 2</fullName>
    </recommendedName>
    <alternativeName>
        <fullName>Venom basic protease inhibitor 2</fullName>
    </alternativeName>
    <alternativeName>
        <fullName>Venom basic protease inhibitor II</fullName>
    </alternativeName>
</protein>